<organism>
    <name type="scientific">Listeria welshimeri serovar 6b (strain ATCC 35897 / DSM 20650 / CCUG 15529 / CIP 8149 / NCTC 11857 / SLCC 5334 / V8)</name>
    <dbReference type="NCBI Taxonomy" id="386043"/>
    <lineage>
        <taxon>Bacteria</taxon>
        <taxon>Bacillati</taxon>
        <taxon>Bacillota</taxon>
        <taxon>Bacilli</taxon>
        <taxon>Bacillales</taxon>
        <taxon>Listeriaceae</taxon>
        <taxon>Listeria</taxon>
    </lineage>
</organism>
<reference key="1">
    <citation type="journal article" date="2006" name="J. Bacteriol.">
        <title>Whole-genome sequence of Listeria welshimeri reveals common steps in genome reduction with Listeria innocua as compared to Listeria monocytogenes.</title>
        <authorList>
            <person name="Hain T."/>
            <person name="Steinweg C."/>
            <person name="Kuenne C.T."/>
            <person name="Billion A."/>
            <person name="Ghai R."/>
            <person name="Chatterjee S.S."/>
            <person name="Domann E."/>
            <person name="Kaerst U."/>
            <person name="Goesmann A."/>
            <person name="Bekel T."/>
            <person name="Bartels D."/>
            <person name="Kaiser O."/>
            <person name="Meyer F."/>
            <person name="Puehler A."/>
            <person name="Weisshaar B."/>
            <person name="Wehland J."/>
            <person name="Liang C."/>
            <person name="Dandekar T."/>
            <person name="Lampidis R."/>
            <person name="Kreft J."/>
            <person name="Goebel W."/>
            <person name="Chakraborty T."/>
        </authorList>
    </citation>
    <scope>NUCLEOTIDE SEQUENCE [LARGE SCALE GENOMIC DNA]</scope>
    <source>
        <strain>ATCC 35897 / DSM 20650 / CCUG 15529 / CIP 8149 / NCTC 11857 / SLCC 5334 / V8</strain>
    </source>
</reference>
<proteinExistence type="inferred from homology"/>
<protein>
    <recommendedName>
        <fullName evidence="1">Small ribosomal subunit protein uS3</fullName>
    </recommendedName>
    <alternativeName>
        <fullName evidence="2">30S ribosomal protein S3</fullName>
    </alternativeName>
</protein>
<name>RS3_LISW6</name>
<evidence type="ECO:0000255" key="1">
    <source>
        <dbReference type="HAMAP-Rule" id="MF_01309"/>
    </source>
</evidence>
<evidence type="ECO:0000305" key="2"/>
<sequence length="218" mass="24542">MGQKVHPIGMRIGVIRDWDSKWYAEKDYADFLHEDLRIRDYVAKRLSDASVSRVEIERAANRVNITIHTAKPGMVIGKGGSEVEALRKNLNELTQKRVHINIVEIKRADLDAKLVAENIARQLEGRVSFRRAQKQAIQRTMRAGAKGIKTQVSGRLGGADIARAEHYSEGTVPLHTLRADIDYAWEEADTTYGKLGVKVWIYRGEVLPTKKNNVEGGK</sequence>
<comment type="function">
    <text evidence="1">Binds the lower part of the 30S subunit head. Binds mRNA in the 70S ribosome, positioning it for translation.</text>
</comment>
<comment type="subunit">
    <text evidence="1">Part of the 30S ribosomal subunit. Forms a tight complex with proteins S10 and S14.</text>
</comment>
<comment type="similarity">
    <text evidence="1">Belongs to the universal ribosomal protein uS3 family.</text>
</comment>
<dbReference type="EMBL" id="AM263198">
    <property type="protein sequence ID" value="CAK21994.1"/>
    <property type="molecule type" value="Genomic_DNA"/>
</dbReference>
<dbReference type="RefSeq" id="WP_003720944.1">
    <property type="nucleotide sequence ID" value="NC_008555.1"/>
</dbReference>
<dbReference type="SMR" id="A0ALW2"/>
<dbReference type="STRING" id="386043.lwe2576"/>
<dbReference type="GeneID" id="93240507"/>
<dbReference type="KEGG" id="lwe:lwe2576"/>
<dbReference type="eggNOG" id="COG0092">
    <property type="taxonomic scope" value="Bacteria"/>
</dbReference>
<dbReference type="HOGENOM" id="CLU_058591_0_2_9"/>
<dbReference type="OrthoDB" id="9806396at2"/>
<dbReference type="Proteomes" id="UP000000779">
    <property type="component" value="Chromosome"/>
</dbReference>
<dbReference type="GO" id="GO:0022627">
    <property type="term" value="C:cytosolic small ribosomal subunit"/>
    <property type="evidence" value="ECO:0007669"/>
    <property type="project" value="TreeGrafter"/>
</dbReference>
<dbReference type="GO" id="GO:0003729">
    <property type="term" value="F:mRNA binding"/>
    <property type="evidence" value="ECO:0007669"/>
    <property type="project" value="UniProtKB-UniRule"/>
</dbReference>
<dbReference type="GO" id="GO:0019843">
    <property type="term" value="F:rRNA binding"/>
    <property type="evidence" value="ECO:0007669"/>
    <property type="project" value="UniProtKB-UniRule"/>
</dbReference>
<dbReference type="GO" id="GO:0003735">
    <property type="term" value="F:structural constituent of ribosome"/>
    <property type="evidence" value="ECO:0007669"/>
    <property type="project" value="InterPro"/>
</dbReference>
<dbReference type="GO" id="GO:0006412">
    <property type="term" value="P:translation"/>
    <property type="evidence" value="ECO:0007669"/>
    <property type="project" value="UniProtKB-UniRule"/>
</dbReference>
<dbReference type="CDD" id="cd02412">
    <property type="entry name" value="KH-II_30S_S3"/>
    <property type="match status" value="1"/>
</dbReference>
<dbReference type="FunFam" id="3.30.1140.32:FF:000001">
    <property type="entry name" value="30S ribosomal protein S3"/>
    <property type="match status" value="1"/>
</dbReference>
<dbReference type="FunFam" id="3.30.300.20:FF:000001">
    <property type="entry name" value="30S ribosomal protein S3"/>
    <property type="match status" value="1"/>
</dbReference>
<dbReference type="Gene3D" id="3.30.300.20">
    <property type="match status" value="1"/>
</dbReference>
<dbReference type="Gene3D" id="3.30.1140.32">
    <property type="entry name" value="Ribosomal protein S3, C-terminal domain"/>
    <property type="match status" value="1"/>
</dbReference>
<dbReference type="HAMAP" id="MF_01309_B">
    <property type="entry name" value="Ribosomal_uS3_B"/>
    <property type="match status" value="1"/>
</dbReference>
<dbReference type="InterPro" id="IPR004087">
    <property type="entry name" value="KH_dom"/>
</dbReference>
<dbReference type="InterPro" id="IPR015946">
    <property type="entry name" value="KH_dom-like_a/b"/>
</dbReference>
<dbReference type="InterPro" id="IPR004044">
    <property type="entry name" value="KH_dom_type_2"/>
</dbReference>
<dbReference type="InterPro" id="IPR009019">
    <property type="entry name" value="KH_sf_prok-type"/>
</dbReference>
<dbReference type="InterPro" id="IPR036419">
    <property type="entry name" value="Ribosomal_S3_C_sf"/>
</dbReference>
<dbReference type="InterPro" id="IPR005704">
    <property type="entry name" value="Ribosomal_uS3_bac-typ"/>
</dbReference>
<dbReference type="InterPro" id="IPR001351">
    <property type="entry name" value="Ribosomal_uS3_C"/>
</dbReference>
<dbReference type="InterPro" id="IPR018280">
    <property type="entry name" value="Ribosomal_uS3_CS"/>
</dbReference>
<dbReference type="NCBIfam" id="TIGR01009">
    <property type="entry name" value="rpsC_bact"/>
    <property type="match status" value="1"/>
</dbReference>
<dbReference type="PANTHER" id="PTHR11760">
    <property type="entry name" value="30S/40S RIBOSOMAL PROTEIN S3"/>
    <property type="match status" value="1"/>
</dbReference>
<dbReference type="PANTHER" id="PTHR11760:SF19">
    <property type="entry name" value="SMALL RIBOSOMAL SUBUNIT PROTEIN US3C"/>
    <property type="match status" value="1"/>
</dbReference>
<dbReference type="Pfam" id="PF07650">
    <property type="entry name" value="KH_2"/>
    <property type="match status" value="1"/>
</dbReference>
<dbReference type="Pfam" id="PF00189">
    <property type="entry name" value="Ribosomal_S3_C"/>
    <property type="match status" value="1"/>
</dbReference>
<dbReference type="SMART" id="SM00322">
    <property type="entry name" value="KH"/>
    <property type="match status" value="1"/>
</dbReference>
<dbReference type="SUPFAM" id="SSF54814">
    <property type="entry name" value="Prokaryotic type KH domain (KH-domain type II)"/>
    <property type="match status" value="1"/>
</dbReference>
<dbReference type="SUPFAM" id="SSF54821">
    <property type="entry name" value="Ribosomal protein S3 C-terminal domain"/>
    <property type="match status" value="1"/>
</dbReference>
<dbReference type="PROSITE" id="PS50823">
    <property type="entry name" value="KH_TYPE_2"/>
    <property type="match status" value="1"/>
</dbReference>
<dbReference type="PROSITE" id="PS00548">
    <property type="entry name" value="RIBOSOMAL_S3"/>
    <property type="match status" value="1"/>
</dbReference>
<feature type="chain" id="PRO_0000293818" description="Small ribosomal subunit protein uS3">
    <location>
        <begin position="1"/>
        <end position="218"/>
    </location>
</feature>
<feature type="domain" description="KH type-2" evidence="1">
    <location>
        <begin position="38"/>
        <end position="106"/>
    </location>
</feature>
<keyword id="KW-0687">Ribonucleoprotein</keyword>
<keyword id="KW-0689">Ribosomal protein</keyword>
<keyword id="KW-0694">RNA-binding</keyword>
<keyword id="KW-0699">rRNA-binding</keyword>
<gene>
    <name evidence="1" type="primary">rpsC</name>
    <name type="ordered locus">lwe2576</name>
</gene>
<accession>A0ALW2</accession>